<proteinExistence type="inferred from homology"/>
<gene>
    <name evidence="1" type="primary">rplP</name>
    <name type="ordered locus">EcSMS35_3608</name>
</gene>
<reference key="1">
    <citation type="journal article" date="2008" name="J. Bacteriol.">
        <title>Insights into the environmental resistance gene pool from the genome sequence of the multidrug-resistant environmental isolate Escherichia coli SMS-3-5.</title>
        <authorList>
            <person name="Fricke W.F."/>
            <person name="Wright M.S."/>
            <person name="Lindell A.H."/>
            <person name="Harkins D.M."/>
            <person name="Baker-Austin C."/>
            <person name="Ravel J."/>
            <person name="Stepanauskas R."/>
        </authorList>
    </citation>
    <scope>NUCLEOTIDE SEQUENCE [LARGE SCALE GENOMIC DNA]</scope>
    <source>
        <strain>SMS-3-5 / SECEC</strain>
    </source>
</reference>
<keyword id="KW-0687">Ribonucleoprotein</keyword>
<keyword id="KW-0689">Ribosomal protein</keyword>
<keyword id="KW-0694">RNA-binding</keyword>
<keyword id="KW-0699">rRNA-binding</keyword>
<keyword id="KW-0820">tRNA-binding</keyword>
<comment type="function">
    <text evidence="1">Binds 23S rRNA and is also seen to make contacts with the A and possibly P site tRNAs.</text>
</comment>
<comment type="subunit">
    <text evidence="1">Part of the 50S ribosomal subunit.</text>
</comment>
<comment type="similarity">
    <text evidence="1">Belongs to the universal ribosomal protein uL16 family.</text>
</comment>
<accession>B1LHC7</accession>
<feature type="chain" id="PRO_1000142970" description="Large ribosomal subunit protein uL16">
    <location>
        <begin position="1"/>
        <end position="136"/>
    </location>
</feature>
<organism>
    <name type="scientific">Escherichia coli (strain SMS-3-5 / SECEC)</name>
    <dbReference type="NCBI Taxonomy" id="439855"/>
    <lineage>
        <taxon>Bacteria</taxon>
        <taxon>Pseudomonadati</taxon>
        <taxon>Pseudomonadota</taxon>
        <taxon>Gammaproteobacteria</taxon>
        <taxon>Enterobacterales</taxon>
        <taxon>Enterobacteriaceae</taxon>
        <taxon>Escherichia</taxon>
    </lineage>
</organism>
<protein>
    <recommendedName>
        <fullName evidence="1">Large ribosomal subunit protein uL16</fullName>
    </recommendedName>
    <alternativeName>
        <fullName evidence="2">50S ribosomal protein L16</fullName>
    </alternativeName>
</protein>
<dbReference type="EMBL" id="CP000970">
    <property type="protein sequence ID" value="ACB16080.1"/>
    <property type="molecule type" value="Genomic_DNA"/>
</dbReference>
<dbReference type="RefSeq" id="WP_000941212.1">
    <property type="nucleotide sequence ID" value="NC_010498.1"/>
</dbReference>
<dbReference type="SMR" id="B1LHC7"/>
<dbReference type="GeneID" id="93778674"/>
<dbReference type="KEGG" id="ecm:EcSMS35_3608"/>
<dbReference type="HOGENOM" id="CLU_078858_2_1_6"/>
<dbReference type="Proteomes" id="UP000007011">
    <property type="component" value="Chromosome"/>
</dbReference>
<dbReference type="GO" id="GO:0022625">
    <property type="term" value="C:cytosolic large ribosomal subunit"/>
    <property type="evidence" value="ECO:0007669"/>
    <property type="project" value="TreeGrafter"/>
</dbReference>
<dbReference type="GO" id="GO:0019843">
    <property type="term" value="F:rRNA binding"/>
    <property type="evidence" value="ECO:0007669"/>
    <property type="project" value="UniProtKB-UniRule"/>
</dbReference>
<dbReference type="GO" id="GO:0003735">
    <property type="term" value="F:structural constituent of ribosome"/>
    <property type="evidence" value="ECO:0007669"/>
    <property type="project" value="InterPro"/>
</dbReference>
<dbReference type="GO" id="GO:0000049">
    <property type="term" value="F:tRNA binding"/>
    <property type="evidence" value="ECO:0007669"/>
    <property type="project" value="UniProtKB-KW"/>
</dbReference>
<dbReference type="GO" id="GO:0006412">
    <property type="term" value="P:translation"/>
    <property type="evidence" value="ECO:0007669"/>
    <property type="project" value="UniProtKB-UniRule"/>
</dbReference>
<dbReference type="CDD" id="cd01433">
    <property type="entry name" value="Ribosomal_L16_L10e"/>
    <property type="match status" value="1"/>
</dbReference>
<dbReference type="FunFam" id="3.90.1170.10:FF:000001">
    <property type="entry name" value="50S ribosomal protein L16"/>
    <property type="match status" value="1"/>
</dbReference>
<dbReference type="Gene3D" id="3.90.1170.10">
    <property type="entry name" value="Ribosomal protein L10e/L16"/>
    <property type="match status" value="1"/>
</dbReference>
<dbReference type="HAMAP" id="MF_01342">
    <property type="entry name" value="Ribosomal_uL16"/>
    <property type="match status" value="1"/>
</dbReference>
<dbReference type="InterPro" id="IPR047873">
    <property type="entry name" value="Ribosomal_uL16"/>
</dbReference>
<dbReference type="InterPro" id="IPR000114">
    <property type="entry name" value="Ribosomal_uL16_bact-type"/>
</dbReference>
<dbReference type="InterPro" id="IPR020798">
    <property type="entry name" value="Ribosomal_uL16_CS"/>
</dbReference>
<dbReference type="InterPro" id="IPR016180">
    <property type="entry name" value="Ribosomal_uL16_dom"/>
</dbReference>
<dbReference type="InterPro" id="IPR036920">
    <property type="entry name" value="Ribosomal_uL16_sf"/>
</dbReference>
<dbReference type="NCBIfam" id="TIGR01164">
    <property type="entry name" value="rplP_bact"/>
    <property type="match status" value="1"/>
</dbReference>
<dbReference type="PANTHER" id="PTHR12220">
    <property type="entry name" value="50S/60S RIBOSOMAL PROTEIN L16"/>
    <property type="match status" value="1"/>
</dbReference>
<dbReference type="PANTHER" id="PTHR12220:SF13">
    <property type="entry name" value="LARGE RIBOSOMAL SUBUNIT PROTEIN UL16M"/>
    <property type="match status" value="1"/>
</dbReference>
<dbReference type="Pfam" id="PF00252">
    <property type="entry name" value="Ribosomal_L16"/>
    <property type="match status" value="1"/>
</dbReference>
<dbReference type="PRINTS" id="PR00060">
    <property type="entry name" value="RIBOSOMALL16"/>
</dbReference>
<dbReference type="SUPFAM" id="SSF54686">
    <property type="entry name" value="Ribosomal protein L16p/L10e"/>
    <property type="match status" value="1"/>
</dbReference>
<dbReference type="PROSITE" id="PS00586">
    <property type="entry name" value="RIBOSOMAL_L16_1"/>
    <property type="match status" value="1"/>
</dbReference>
<dbReference type="PROSITE" id="PS00701">
    <property type="entry name" value="RIBOSOMAL_L16_2"/>
    <property type="match status" value="1"/>
</dbReference>
<evidence type="ECO:0000255" key="1">
    <source>
        <dbReference type="HAMAP-Rule" id="MF_01342"/>
    </source>
</evidence>
<evidence type="ECO:0000305" key="2"/>
<sequence>MLQPKRTKFRKMHKGRNRGLAQGTDVSFGSFGLKAVGRGRLTARQIEAARRAMTRAVKRQGKIWIRVFPDKPITEKPLAVRMGKGKGNVEYWVALIQPGKVLYEMDGVPEELAREAFKLAAAKLPIKTTFVTKTVM</sequence>
<name>RL16_ECOSM</name>